<accession>A9QC58</accession>
<geneLocation type="chloroplast"/>
<protein>
    <recommendedName>
        <fullName evidence="1">NAD(P)H-quinone oxidoreductase subunit 4L, chloroplastic</fullName>
        <ecNumber evidence="1">7.1.1.-</ecNumber>
    </recommendedName>
    <alternativeName>
        <fullName evidence="1">NAD(P)H dehydrogenase subunit 4L</fullName>
    </alternativeName>
    <alternativeName>
        <fullName evidence="1">NADH-plastoquinone oxidoreductase subunit 4L</fullName>
    </alternativeName>
</protein>
<sequence length="100" mass="11089">MLEHVLVLSAYLFSVGLYGLITSRNMVRALICLELIFNAVNINFVTFSDFFDSRHLKGSIFAIFVIAIAAAEAAIGLAILSAIYRNRKSIHINQSNLLTK</sequence>
<gene>
    <name evidence="1" type="primary">ndhE</name>
</gene>
<evidence type="ECO:0000255" key="1">
    <source>
        <dbReference type="HAMAP-Rule" id="MF_01456"/>
    </source>
</evidence>
<feature type="chain" id="PRO_0000360369" description="NAD(P)H-quinone oxidoreductase subunit 4L, chloroplastic">
    <location>
        <begin position="1"/>
        <end position="100"/>
    </location>
</feature>
<feature type="transmembrane region" description="Helical" evidence="1">
    <location>
        <begin position="1"/>
        <end position="21"/>
    </location>
</feature>
<feature type="transmembrane region" description="Helical" evidence="1">
    <location>
        <begin position="31"/>
        <end position="51"/>
    </location>
</feature>
<feature type="transmembrane region" description="Helical" evidence="1">
    <location>
        <begin position="60"/>
        <end position="80"/>
    </location>
</feature>
<dbReference type="EC" id="7.1.1.-" evidence="1"/>
<dbReference type="EMBL" id="EU017243">
    <property type="protein sequence ID" value="ABU85651.1"/>
    <property type="molecule type" value="Genomic_DNA"/>
</dbReference>
<dbReference type="EMBL" id="EU090187">
    <property type="protein sequence ID" value="ABV26536.1"/>
    <property type="molecule type" value="Genomic_DNA"/>
</dbReference>
<dbReference type="RefSeq" id="YP_001718711.1">
    <property type="nucleotide sequence ID" value="NC_010442.1"/>
</dbReference>
<dbReference type="SMR" id="A9QC58"/>
<dbReference type="GeneID" id="6155952"/>
<dbReference type="GO" id="GO:0009535">
    <property type="term" value="C:chloroplast thylakoid membrane"/>
    <property type="evidence" value="ECO:0007669"/>
    <property type="project" value="UniProtKB-SubCell"/>
</dbReference>
<dbReference type="GO" id="GO:0030964">
    <property type="term" value="C:NADH dehydrogenase complex"/>
    <property type="evidence" value="ECO:0007669"/>
    <property type="project" value="TreeGrafter"/>
</dbReference>
<dbReference type="GO" id="GO:0016655">
    <property type="term" value="F:oxidoreductase activity, acting on NAD(P)H, quinone or similar compound as acceptor"/>
    <property type="evidence" value="ECO:0007669"/>
    <property type="project" value="UniProtKB-UniRule"/>
</dbReference>
<dbReference type="GO" id="GO:0048038">
    <property type="term" value="F:quinone binding"/>
    <property type="evidence" value="ECO:0007669"/>
    <property type="project" value="UniProtKB-KW"/>
</dbReference>
<dbReference type="GO" id="GO:0042773">
    <property type="term" value="P:ATP synthesis coupled electron transport"/>
    <property type="evidence" value="ECO:0007669"/>
    <property type="project" value="InterPro"/>
</dbReference>
<dbReference type="GO" id="GO:0019684">
    <property type="term" value="P:photosynthesis, light reaction"/>
    <property type="evidence" value="ECO:0007669"/>
    <property type="project" value="UniProtKB-UniRule"/>
</dbReference>
<dbReference type="FunFam" id="1.10.287.3510:FF:000001">
    <property type="entry name" value="NADH-quinone oxidoreductase subunit K"/>
    <property type="match status" value="1"/>
</dbReference>
<dbReference type="Gene3D" id="1.10.287.3510">
    <property type="match status" value="1"/>
</dbReference>
<dbReference type="HAMAP" id="MF_01456">
    <property type="entry name" value="NDH1_NuoK"/>
    <property type="match status" value="1"/>
</dbReference>
<dbReference type="InterPro" id="IPR001133">
    <property type="entry name" value="NADH_UbQ_OxRdtase_chain4L/K"/>
</dbReference>
<dbReference type="InterPro" id="IPR039428">
    <property type="entry name" value="NUOK/Mnh_C1-like"/>
</dbReference>
<dbReference type="NCBIfam" id="NF004320">
    <property type="entry name" value="PRK05715.1-2"/>
    <property type="match status" value="1"/>
</dbReference>
<dbReference type="NCBIfam" id="NF004322">
    <property type="entry name" value="PRK05715.1-4"/>
    <property type="match status" value="1"/>
</dbReference>
<dbReference type="NCBIfam" id="NF004323">
    <property type="entry name" value="PRK05715.1-5"/>
    <property type="match status" value="1"/>
</dbReference>
<dbReference type="PANTHER" id="PTHR11434:SF16">
    <property type="entry name" value="NADH-UBIQUINONE OXIDOREDUCTASE CHAIN 4L"/>
    <property type="match status" value="1"/>
</dbReference>
<dbReference type="PANTHER" id="PTHR11434">
    <property type="entry name" value="NADH-UBIQUINONE OXIDOREDUCTASE SUBUNIT ND4L"/>
    <property type="match status" value="1"/>
</dbReference>
<dbReference type="Pfam" id="PF00420">
    <property type="entry name" value="Oxidored_q2"/>
    <property type="match status" value="1"/>
</dbReference>
<reference key="1">
    <citation type="journal article" date="2007" name="Proc. Natl. Acad. Sci. U.S.A.">
        <title>Analysis of 81 genes from 64 plastid genomes resolves relationships in angiosperms and identifies genome-scale evolutionary patterns.</title>
        <authorList>
            <person name="Jansen R.K."/>
            <person name="Cai Z."/>
            <person name="Raubeson L.A."/>
            <person name="Daniell H."/>
            <person name="dePamphilis C.W."/>
            <person name="Leebens-Mack J."/>
            <person name="Muller K.F."/>
            <person name="Guisinger-Bellian M."/>
            <person name="Haberle R.C."/>
            <person name="Hansen A.K."/>
            <person name="Chumley T.W."/>
            <person name="Lee S.B."/>
            <person name="Peery R."/>
            <person name="McNeal J.R."/>
            <person name="Kuehl J.V."/>
            <person name="Boore J.L."/>
        </authorList>
    </citation>
    <scope>NUCLEOTIDE SEQUENCE [GENOMIC DNA]</scope>
</reference>
<reference key="2">
    <citation type="journal article" date="2008" name="J. Mol. Evol.">
        <title>Extensive rearrangements in the chloroplast genome of Trachelium caeruleum are associated with repeats and tRNA genes.</title>
        <authorList>
            <person name="Haberle R.C."/>
            <person name="Fourcade H.M."/>
            <person name="Boore J.L."/>
            <person name="Jansen R.K."/>
        </authorList>
    </citation>
    <scope>NUCLEOTIDE SEQUENCE [LARGE SCALE GENOMIC DNA]</scope>
</reference>
<name>NU4LC_TRACE</name>
<comment type="function">
    <text evidence="1">NDH shuttles electrons from NAD(P)H:plastoquinone, via FMN and iron-sulfur (Fe-S) centers, to quinones in the photosynthetic chain and possibly in a chloroplast respiratory chain. The immediate electron acceptor for the enzyme in this species is believed to be plastoquinone. Couples the redox reaction to proton translocation, and thus conserves the redox energy in a proton gradient.</text>
</comment>
<comment type="catalytic activity">
    <reaction evidence="1">
        <text>a plastoquinone + NADH + (n+1) H(+)(in) = a plastoquinol + NAD(+) + n H(+)(out)</text>
        <dbReference type="Rhea" id="RHEA:42608"/>
        <dbReference type="Rhea" id="RHEA-COMP:9561"/>
        <dbReference type="Rhea" id="RHEA-COMP:9562"/>
        <dbReference type="ChEBI" id="CHEBI:15378"/>
        <dbReference type="ChEBI" id="CHEBI:17757"/>
        <dbReference type="ChEBI" id="CHEBI:57540"/>
        <dbReference type="ChEBI" id="CHEBI:57945"/>
        <dbReference type="ChEBI" id="CHEBI:62192"/>
    </reaction>
</comment>
<comment type="catalytic activity">
    <reaction evidence="1">
        <text>a plastoquinone + NADPH + (n+1) H(+)(in) = a plastoquinol + NADP(+) + n H(+)(out)</text>
        <dbReference type="Rhea" id="RHEA:42612"/>
        <dbReference type="Rhea" id="RHEA-COMP:9561"/>
        <dbReference type="Rhea" id="RHEA-COMP:9562"/>
        <dbReference type="ChEBI" id="CHEBI:15378"/>
        <dbReference type="ChEBI" id="CHEBI:17757"/>
        <dbReference type="ChEBI" id="CHEBI:57783"/>
        <dbReference type="ChEBI" id="CHEBI:58349"/>
        <dbReference type="ChEBI" id="CHEBI:62192"/>
    </reaction>
</comment>
<comment type="subunit">
    <text evidence="1">NDH is composed of at least 16 different subunits, 5 of which are encoded in the nucleus.</text>
</comment>
<comment type="subcellular location">
    <subcellularLocation>
        <location evidence="1">Plastid</location>
        <location evidence="1">Chloroplast thylakoid membrane</location>
        <topology evidence="1">Multi-pass membrane protein</topology>
    </subcellularLocation>
</comment>
<comment type="similarity">
    <text evidence="1">Belongs to the complex I subunit 4L family.</text>
</comment>
<organism>
    <name type="scientific">Trachelium caeruleum</name>
    <name type="common">Blue throatwort</name>
    <dbReference type="NCBI Taxonomy" id="28494"/>
    <lineage>
        <taxon>Eukaryota</taxon>
        <taxon>Viridiplantae</taxon>
        <taxon>Streptophyta</taxon>
        <taxon>Embryophyta</taxon>
        <taxon>Tracheophyta</taxon>
        <taxon>Spermatophyta</taxon>
        <taxon>Magnoliopsida</taxon>
        <taxon>eudicotyledons</taxon>
        <taxon>Gunneridae</taxon>
        <taxon>Pentapetalae</taxon>
        <taxon>asterids</taxon>
        <taxon>campanulids</taxon>
        <taxon>Asterales</taxon>
        <taxon>Campanulaceae</taxon>
        <taxon>Trachelium</taxon>
    </lineage>
</organism>
<keyword id="KW-0150">Chloroplast</keyword>
<keyword id="KW-0472">Membrane</keyword>
<keyword id="KW-0520">NAD</keyword>
<keyword id="KW-0521">NADP</keyword>
<keyword id="KW-0934">Plastid</keyword>
<keyword id="KW-0618">Plastoquinone</keyword>
<keyword id="KW-0874">Quinone</keyword>
<keyword id="KW-0793">Thylakoid</keyword>
<keyword id="KW-1278">Translocase</keyword>
<keyword id="KW-0812">Transmembrane</keyword>
<keyword id="KW-1133">Transmembrane helix</keyword>
<keyword id="KW-0813">Transport</keyword>
<proteinExistence type="inferred from homology"/>